<protein>
    <recommendedName>
        <fullName>Putative FBD-associated F-box protein At5g56560</fullName>
    </recommendedName>
</protein>
<evidence type="ECO:0000255" key="1">
    <source>
        <dbReference type="PROSITE-ProRule" id="PRU00080"/>
    </source>
</evidence>
<evidence type="ECO:0000305" key="2"/>
<dbReference type="EMBL" id="AB013392">
    <property type="protein sequence ID" value="BAB09873.1"/>
    <property type="status" value="ALT_SEQ"/>
    <property type="molecule type" value="Genomic_DNA"/>
</dbReference>
<dbReference type="EMBL" id="AB019234">
    <property type="protein sequence ID" value="BAB09873.1"/>
    <property type="status" value="JOINED"/>
    <property type="molecule type" value="Genomic_DNA"/>
</dbReference>
<dbReference type="EMBL" id="CP002688">
    <property type="protein sequence ID" value="AED96781.1"/>
    <property type="status" value="ALT_SEQ"/>
    <property type="molecule type" value="Genomic_DNA"/>
</dbReference>
<dbReference type="EMBL" id="CP002688">
    <property type="protein sequence ID" value="ANM70149.1"/>
    <property type="molecule type" value="Genomic_DNA"/>
</dbReference>
<dbReference type="RefSeq" id="NP_001331780.1">
    <property type="nucleotide sequence ID" value="NM_001345207.1"/>
</dbReference>
<dbReference type="RefSeq" id="NP_200467.2">
    <property type="nucleotide sequence ID" value="NM_125039.2"/>
</dbReference>
<dbReference type="iPTMnet" id="Q9FJV2"/>
<dbReference type="EnsemblPlants" id="AT5G56560.2">
    <property type="protein sequence ID" value="AT5G56560.2"/>
    <property type="gene ID" value="AT5G56560"/>
</dbReference>
<dbReference type="GeneID" id="835757"/>
<dbReference type="Gramene" id="AT5G56560.2">
    <property type="protein sequence ID" value="AT5G56560.2"/>
    <property type="gene ID" value="AT5G56560"/>
</dbReference>
<dbReference type="KEGG" id="ath:AT5G56560"/>
<dbReference type="Araport" id="AT5G56560"/>
<dbReference type="TAIR" id="AT5G56560"/>
<dbReference type="InParanoid" id="Q9FJV2"/>
<dbReference type="OMA" id="IMANIKV"/>
<dbReference type="PRO" id="PR:Q9FJV2"/>
<dbReference type="Proteomes" id="UP000006548">
    <property type="component" value="Chromosome 5"/>
</dbReference>
<dbReference type="ExpressionAtlas" id="Q9FJV2">
    <property type="expression patterns" value="baseline"/>
</dbReference>
<dbReference type="CDD" id="cd22160">
    <property type="entry name" value="F-box_AtFBL13-like"/>
    <property type="match status" value="1"/>
</dbReference>
<dbReference type="Gene3D" id="1.20.1280.50">
    <property type="match status" value="1"/>
</dbReference>
<dbReference type="Gene3D" id="3.80.10.10">
    <property type="entry name" value="Ribonuclease Inhibitor"/>
    <property type="match status" value="1"/>
</dbReference>
<dbReference type="InterPro" id="IPR036047">
    <property type="entry name" value="F-box-like_dom_sf"/>
</dbReference>
<dbReference type="InterPro" id="IPR053781">
    <property type="entry name" value="F-box_AtFBL13-like"/>
</dbReference>
<dbReference type="InterPro" id="IPR001810">
    <property type="entry name" value="F-box_dom"/>
</dbReference>
<dbReference type="InterPro" id="IPR006566">
    <property type="entry name" value="FBD"/>
</dbReference>
<dbReference type="InterPro" id="IPR050232">
    <property type="entry name" value="FBL13/AtMIF1-like"/>
</dbReference>
<dbReference type="InterPro" id="IPR032675">
    <property type="entry name" value="LRR_dom_sf"/>
</dbReference>
<dbReference type="InterPro" id="IPR055411">
    <property type="entry name" value="LRR_FXL15/At3g58940/PEG3-like"/>
</dbReference>
<dbReference type="PANTHER" id="PTHR31900:SF36">
    <property type="entry name" value="F-BOX DOMAIN-CONTAINING PROTEIN"/>
    <property type="match status" value="1"/>
</dbReference>
<dbReference type="PANTHER" id="PTHR31900">
    <property type="entry name" value="F-BOX/RNI SUPERFAMILY PROTEIN-RELATED"/>
    <property type="match status" value="1"/>
</dbReference>
<dbReference type="Pfam" id="PF08387">
    <property type="entry name" value="FBD"/>
    <property type="match status" value="1"/>
</dbReference>
<dbReference type="Pfam" id="PF24758">
    <property type="entry name" value="LRR_At5g56370"/>
    <property type="match status" value="1"/>
</dbReference>
<dbReference type="SMART" id="SM00579">
    <property type="entry name" value="FBD"/>
    <property type="match status" value="1"/>
</dbReference>
<dbReference type="SUPFAM" id="SSF81383">
    <property type="entry name" value="F-box domain"/>
    <property type="match status" value="1"/>
</dbReference>
<dbReference type="SUPFAM" id="SSF52047">
    <property type="entry name" value="RNI-like"/>
    <property type="match status" value="1"/>
</dbReference>
<dbReference type="PROSITE" id="PS50181">
    <property type="entry name" value="FBOX"/>
    <property type="match status" value="1"/>
</dbReference>
<gene>
    <name type="ordered locus">At5g56560</name>
    <name type="ORF">MKN22.8</name>
</gene>
<reference key="1">
    <citation type="journal article" date="1998" name="DNA Res.">
        <title>Structural analysis of Arabidopsis thaliana chromosome 5. VI. Sequence features of the regions of 1,367,185 bp covered by 19 physically assigned P1 and TAC clones.</title>
        <authorList>
            <person name="Kotani H."/>
            <person name="Nakamura Y."/>
            <person name="Sato S."/>
            <person name="Asamizu E."/>
            <person name="Kaneko T."/>
            <person name="Miyajima N."/>
            <person name="Tabata S."/>
        </authorList>
    </citation>
    <scope>NUCLEOTIDE SEQUENCE [LARGE SCALE GENOMIC DNA]</scope>
    <source>
        <strain>cv. Columbia</strain>
    </source>
</reference>
<reference key="2">
    <citation type="journal article" date="2000" name="DNA Res.">
        <title>Structural analysis of Arabidopsis thaliana chromosome 5. X. Sequence features of the regions of 3,076,755 bp covered by sixty P1 and TAC clones.</title>
        <authorList>
            <person name="Sato S."/>
            <person name="Nakamura Y."/>
            <person name="Kaneko T."/>
            <person name="Katoh T."/>
            <person name="Asamizu E."/>
            <person name="Kotani H."/>
            <person name="Tabata S."/>
        </authorList>
    </citation>
    <scope>NUCLEOTIDE SEQUENCE [LARGE SCALE GENOMIC DNA]</scope>
    <source>
        <strain>cv. Columbia</strain>
    </source>
</reference>
<reference key="3">
    <citation type="journal article" date="2017" name="Plant J.">
        <title>Araport11: a complete reannotation of the Arabidopsis thaliana reference genome.</title>
        <authorList>
            <person name="Cheng C.Y."/>
            <person name="Krishnakumar V."/>
            <person name="Chan A.P."/>
            <person name="Thibaud-Nissen F."/>
            <person name="Schobel S."/>
            <person name="Town C.D."/>
        </authorList>
    </citation>
    <scope>GENOME REANNOTATION</scope>
    <source>
        <strain>cv. Columbia</strain>
    </source>
</reference>
<organism>
    <name type="scientific">Arabidopsis thaliana</name>
    <name type="common">Mouse-ear cress</name>
    <dbReference type="NCBI Taxonomy" id="3702"/>
    <lineage>
        <taxon>Eukaryota</taxon>
        <taxon>Viridiplantae</taxon>
        <taxon>Streptophyta</taxon>
        <taxon>Embryophyta</taxon>
        <taxon>Tracheophyta</taxon>
        <taxon>Spermatophyta</taxon>
        <taxon>Magnoliopsida</taxon>
        <taxon>eudicotyledons</taxon>
        <taxon>Gunneridae</taxon>
        <taxon>Pentapetalae</taxon>
        <taxon>rosids</taxon>
        <taxon>malvids</taxon>
        <taxon>Brassicales</taxon>
        <taxon>Brassicaceae</taxon>
        <taxon>Camelineae</taxon>
        <taxon>Arabidopsis</taxon>
    </lineage>
</organism>
<name>FBD27_ARATH</name>
<feature type="chain" id="PRO_0000283159" description="Putative FBD-associated F-box protein At5g56560">
    <location>
        <begin position="1"/>
        <end position="418"/>
    </location>
</feature>
<feature type="domain" description="F-box" evidence="1">
    <location>
        <begin position="4"/>
        <end position="60"/>
    </location>
</feature>
<feature type="domain" description="FBD">
    <location>
        <begin position="340"/>
        <end position="390"/>
    </location>
</feature>
<keyword id="KW-1185">Reference proteome</keyword>
<accession>Q9FJV2</accession>
<accession>F4K7Q0</accession>
<proteinExistence type="predicted"/>
<comment type="sequence caution" evidence="2">
    <conflict type="erroneous gene model prediction">
        <sequence resource="EMBL-CDS" id="AED96781"/>
    </conflict>
</comment>
<comment type="sequence caution" evidence="2">
    <conflict type="erroneous gene model prediction">
        <sequence resource="EMBL-CDS" id="BAB09873"/>
    </conflict>
</comment>
<sequence>MEKQTRLSDLPDELLLKILSALPMFKVTLATRLISRRWKGPWKLVPDVTFDDDDIPFKSFETFMSFVYGSFLSNDAQILDRLHLKLNQKYSASDINFWVQVAVNRSVRELRIDLFGKTLELPCCLCSCITLKELTLHDLCIKVVPAWFRLPSLKTLHLLSVKFSSDGFVASILRICPVLERLVVDGTKGNVMITNIDVPTLRNLSIRNSKGKGTYVEGSKGFVIKAPSLTDLNFEDTLSNFLMFEPMPEVIKADIQVICDQSKNFIGSLTSIQHLSLCSLTSKTPYPACTVFSSLKYLELCTCSARWANLFACILNAAPELRSLKLKSKHKFNYNDPMTLWEEPAVVAKCLSEHLEIFEWRQYEGTEQERNVAGYILANATCLKMATFSTRCRNRNHRMLKKLKSMDRVSKACRLVFD</sequence>